<accession>P51984</accession>
<evidence type="ECO:0000250" key="1"/>
<evidence type="ECO:0000255" key="2">
    <source>
        <dbReference type="PROSITE-ProRule" id="PRU00312"/>
    </source>
</evidence>
<evidence type="ECO:0000255" key="3">
    <source>
        <dbReference type="PROSITE-ProRule" id="PRU00978"/>
    </source>
</evidence>
<evidence type="ECO:0000256" key="4">
    <source>
        <dbReference type="SAM" id="MobiDB-lite"/>
    </source>
</evidence>
<evidence type="ECO:0000305" key="5"/>
<keyword id="KW-0238">DNA-binding</keyword>
<keyword id="KW-0539">Nucleus</keyword>
<keyword id="KW-0804">Transcription</keyword>
<keyword id="KW-0805">Transcription regulation</keyword>
<comment type="function">
    <text>This protein binds the cAMP response element (CRE), sequence present in many viral and cellular promoters. Could regulate the transcriptional activity of genes involved in regeneration processes.</text>
</comment>
<comment type="subunit">
    <text evidence="1">Binds DNA as a dimer.</text>
</comment>
<comment type="subcellular location">
    <subcellularLocation>
        <location>Nucleus</location>
    </subcellularLocation>
</comment>
<comment type="similarity">
    <text evidence="5">Belongs to the bZIP family.</text>
</comment>
<protein>
    <recommendedName>
        <fullName>Cyclic AMP-responsive element-binding protein</fullName>
        <shortName>cAMP-responsive element-binding protein</shortName>
    </recommendedName>
    <alternativeName>
        <fullName>cAMP response element-binding protein</fullName>
    </alternativeName>
</protein>
<feature type="chain" id="PRO_0000076610" description="Cyclic AMP-responsive element-binding protein">
    <location>
        <begin position="1"/>
        <end position="249"/>
    </location>
</feature>
<feature type="domain" description="KID" evidence="2">
    <location>
        <begin position="35"/>
        <end position="94"/>
    </location>
</feature>
<feature type="domain" description="bZIP" evidence="3">
    <location>
        <begin position="191"/>
        <end position="249"/>
    </location>
</feature>
<feature type="region of interest" description="Disordered" evidence="4">
    <location>
        <begin position="73"/>
        <end position="106"/>
    </location>
</feature>
<feature type="region of interest" description="Basic motif" evidence="3">
    <location>
        <begin position="192"/>
        <end position="217"/>
    </location>
</feature>
<feature type="region of interest" description="Leucine-zipper" evidence="3">
    <location>
        <begin position="219"/>
        <end position="240"/>
    </location>
</feature>
<feature type="compositionally biased region" description="Low complexity" evidence="4">
    <location>
        <begin position="90"/>
        <end position="100"/>
    </location>
</feature>
<reference key="1">
    <citation type="journal article" date="1995" name="Development">
        <title>The cAMP response element binding protein is involved in hydra regeneration.</title>
        <authorList>
            <person name="Galliot B."/>
            <person name="Welschof M."/>
            <person name="Schuckert O."/>
            <person name="Hoffmeister S."/>
            <person name="Schaller H.C."/>
        </authorList>
    </citation>
    <scope>NUCLEOTIDE SEQUENCE [GENOMIC DNA]</scope>
</reference>
<organism>
    <name type="scientific">Hydra viridissima</name>
    <name type="common">Green hydra</name>
    <name type="synonym">Chlorohydra viridissima</name>
    <dbReference type="NCBI Taxonomy" id="6082"/>
    <lineage>
        <taxon>Eukaryota</taxon>
        <taxon>Metazoa</taxon>
        <taxon>Cnidaria</taxon>
        <taxon>Hydrozoa</taxon>
        <taxon>Hydroidolina</taxon>
        <taxon>Anthoathecata</taxon>
        <taxon>Aplanulata</taxon>
        <taxon>Hydridae</taxon>
        <taxon>Hydra</taxon>
    </lineage>
</organism>
<proteinExistence type="inferred from homology"/>
<dbReference type="EMBL" id="X83873">
    <property type="protein sequence ID" value="CAA58753.1"/>
    <property type="molecule type" value="Genomic_DNA"/>
</dbReference>
<dbReference type="SMR" id="P51984"/>
<dbReference type="GO" id="GO:0005634">
    <property type="term" value="C:nucleus"/>
    <property type="evidence" value="ECO:0007669"/>
    <property type="project" value="UniProtKB-SubCell"/>
</dbReference>
<dbReference type="GO" id="GO:0005667">
    <property type="term" value="C:transcription regulator complex"/>
    <property type="evidence" value="ECO:0007669"/>
    <property type="project" value="TreeGrafter"/>
</dbReference>
<dbReference type="GO" id="GO:0000981">
    <property type="term" value="F:DNA-binding transcription factor activity, RNA polymerase II-specific"/>
    <property type="evidence" value="ECO:0007669"/>
    <property type="project" value="TreeGrafter"/>
</dbReference>
<dbReference type="GO" id="GO:0000978">
    <property type="term" value="F:RNA polymerase II cis-regulatory region sequence-specific DNA binding"/>
    <property type="evidence" value="ECO:0007669"/>
    <property type="project" value="TreeGrafter"/>
</dbReference>
<dbReference type="CDD" id="cd14690">
    <property type="entry name" value="bZIP_CREB1"/>
    <property type="match status" value="1"/>
</dbReference>
<dbReference type="FunFam" id="1.20.5.170:FF:000003">
    <property type="entry name" value="cAMP-responsive element modulator isoform X2"/>
    <property type="match status" value="1"/>
</dbReference>
<dbReference type="Gene3D" id="1.20.5.170">
    <property type="match status" value="1"/>
</dbReference>
<dbReference type="InterPro" id="IPR004827">
    <property type="entry name" value="bZIP"/>
</dbReference>
<dbReference type="InterPro" id="IPR046347">
    <property type="entry name" value="bZIP_sf"/>
</dbReference>
<dbReference type="InterPro" id="IPR003102">
    <property type="entry name" value="CREB1-like_pKID"/>
</dbReference>
<dbReference type="InterPro" id="IPR001630">
    <property type="entry name" value="Leuzip_CREB"/>
</dbReference>
<dbReference type="PANTHER" id="PTHR45879">
    <property type="entry name" value="CYCLIC AMP RESPONSE ELEMENT-BINDING PROTEIN B"/>
    <property type="match status" value="1"/>
</dbReference>
<dbReference type="PANTHER" id="PTHR45879:SF3">
    <property type="entry name" value="CYCLIC AMP RESPONSE ELEMENT-BINDING PROTEIN B"/>
    <property type="match status" value="1"/>
</dbReference>
<dbReference type="Pfam" id="PF00170">
    <property type="entry name" value="bZIP_1"/>
    <property type="match status" value="1"/>
</dbReference>
<dbReference type="Pfam" id="PF02173">
    <property type="entry name" value="pKID"/>
    <property type="match status" value="1"/>
</dbReference>
<dbReference type="PRINTS" id="PR00041">
    <property type="entry name" value="LEUZIPPRCREB"/>
</dbReference>
<dbReference type="SMART" id="SM00338">
    <property type="entry name" value="BRLZ"/>
    <property type="match status" value="1"/>
</dbReference>
<dbReference type="SUPFAM" id="SSF57959">
    <property type="entry name" value="Leucine zipper domain"/>
    <property type="match status" value="1"/>
</dbReference>
<dbReference type="PROSITE" id="PS50217">
    <property type="entry name" value="BZIP"/>
    <property type="match status" value="1"/>
</dbReference>
<dbReference type="PROSITE" id="PS00036">
    <property type="entry name" value="BZIP_BASIC"/>
    <property type="match status" value="1"/>
</dbReference>
<dbReference type="PROSITE" id="PS50953">
    <property type="entry name" value="KID"/>
    <property type="match status" value="1"/>
</dbReference>
<sequence length="249" mass="27950">MELARHSFQQPLNVAPSLSNVVNKTSVVLQQQSVIQPNQHQLQHQLQTMHDGGIDGKRREILARRPSYRRILDDLAGDGPVKMENYDDTGSSGESSPNGNNEEDINGINQSVSHQEKQYQSIHLNGIVSSVQGGENSLNQLHDSQPGDNQYIITTQGPDNKIQAYTIKGTLPIGLDNTSLASPHQLAEEATRKRELRLYKNREAARECRRKKKEYVKCLENRVAVLENQNKALIEELKSLKDLYCSKGD</sequence>
<name>CREB_HYDVD</name>
<gene>
    <name type="primary">CREB</name>
</gene>